<name>CEP44_XENLA</name>
<sequence length="384" mass="43504">MATGDVKGCIRKLEQRLRTLNYPRDVDYTGLIKGDPSASLPIISYTFTCYSTSIAEILISFGIELTTKSDLRFIEAVYKVLRDVFNYKPILTKQQFLQCAFSERKIQIICDIVDCVVKKHKEITGQNKVKSQLVKKVVSAKDQCEVFYPEDVSVQPSVKTTQKKPLVERHAGSEFLLPTKCYSSALVEDIEEEEPTSDSEGGSHLEHEMESPFETAETTPNSEQIELLRKQLAECQEKLQRLDCVEQRLQSLETSMKGKIIIDETDWNNLLSRVLLLETEGLLQSKKTDFSVPSEFACISEQRTSSRMTNEICSNLKTKADIPESHHQSSGYSFVLSADTSPIAIDINYSSLTEDSNETTKQRMERITKMMEETSKLLKCSNNT</sequence>
<reference key="1">
    <citation type="submission" date="2007-02" db="EMBL/GenBank/DDBJ databases">
        <authorList>
            <consortium name="NIH - Xenopus Gene Collection (XGC) project"/>
        </authorList>
    </citation>
    <scope>NUCLEOTIDE SEQUENCE [LARGE SCALE MRNA]</scope>
    <source>
        <tissue>Embryo</tissue>
    </source>
</reference>
<feature type="chain" id="PRO_0000293726" description="Centrosomal protein of 44 kDa">
    <location>
        <begin position="1"/>
        <end position="384"/>
    </location>
</feature>
<feature type="region of interest" description="Binds with microtubules and centrioles" evidence="1">
    <location>
        <begin position="11"/>
        <end position="188"/>
    </location>
</feature>
<feature type="region of interest" description="Disordered" evidence="3">
    <location>
        <begin position="191"/>
        <end position="222"/>
    </location>
</feature>
<feature type="coiled-coil region" evidence="2">
    <location>
        <begin position="221"/>
        <end position="260"/>
    </location>
</feature>
<feature type="coiled-coil region" evidence="2">
    <location>
        <begin position="353"/>
        <end position="378"/>
    </location>
</feature>
<feature type="compositionally biased region" description="Basic and acidic residues" evidence="3">
    <location>
        <begin position="201"/>
        <end position="210"/>
    </location>
</feature>
<protein>
    <recommendedName>
        <fullName>Centrosomal protein of 44 kDa</fullName>
        <shortName>Cep44</shortName>
    </recommendedName>
</protein>
<organism>
    <name type="scientific">Xenopus laevis</name>
    <name type="common">African clawed frog</name>
    <dbReference type="NCBI Taxonomy" id="8355"/>
    <lineage>
        <taxon>Eukaryota</taxon>
        <taxon>Metazoa</taxon>
        <taxon>Chordata</taxon>
        <taxon>Craniata</taxon>
        <taxon>Vertebrata</taxon>
        <taxon>Euteleostomi</taxon>
        <taxon>Amphibia</taxon>
        <taxon>Batrachia</taxon>
        <taxon>Anura</taxon>
        <taxon>Pipoidea</taxon>
        <taxon>Pipidae</taxon>
        <taxon>Xenopodinae</taxon>
        <taxon>Xenopus</taxon>
        <taxon>Xenopus</taxon>
    </lineage>
</organism>
<dbReference type="EMBL" id="BC133258">
    <property type="protein sequence ID" value="AAI33259.1"/>
    <property type="molecule type" value="mRNA"/>
</dbReference>
<dbReference type="RefSeq" id="NP_001091324.1">
    <property type="nucleotide sequence ID" value="NM_001097855.1"/>
</dbReference>
<dbReference type="SMR" id="A2RVA7"/>
<dbReference type="GeneID" id="100037156"/>
<dbReference type="KEGG" id="xla:100037156"/>
<dbReference type="AGR" id="Xenbase:XB-GENE-5870211"/>
<dbReference type="CTD" id="100037156"/>
<dbReference type="Xenbase" id="XB-GENE-5870211">
    <property type="gene designation" value="cep44.L"/>
</dbReference>
<dbReference type="OrthoDB" id="259598at2759"/>
<dbReference type="Proteomes" id="UP000186698">
    <property type="component" value="Chromosome 1L"/>
</dbReference>
<dbReference type="Bgee" id="100037156">
    <property type="expression patterns" value="Expressed in egg cell and 19 other cell types or tissues"/>
</dbReference>
<dbReference type="GO" id="GO:0005814">
    <property type="term" value="C:centriole"/>
    <property type="evidence" value="ECO:0000250"/>
    <property type="project" value="UniProtKB"/>
</dbReference>
<dbReference type="GO" id="GO:0005813">
    <property type="term" value="C:centrosome"/>
    <property type="evidence" value="ECO:0000250"/>
    <property type="project" value="UniProtKB"/>
</dbReference>
<dbReference type="GO" id="GO:0005737">
    <property type="term" value="C:cytoplasm"/>
    <property type="evidence" value="ECO:0007669"/>
    <property type="project" value="UniProtKB-KW"/>
</dbReference>
<dbReference type="GO" id="GO:0030496">
    <property type="term" value="C:midbody"/>
    <property type="evidence" value="ECO:0007669"/>
    <property type="project" value="UniProtKB-SubCell"/>
</dbReference>
<dbReference type="GO" id="GO:0000922">
    <property type="term" value="C:spindle pole"/>
    <property type="evidence" value="ECO:0000250"/>
    <property type="project" value="UniProtKB"/>
</dbReference>
<dbReference type="GO" id="GO:0008017">
    <property type="term" value="F:microtubule binding"/>
    <property type="evidence" value="ECO:0000250"/>
    <property type="project" value="UniProtKB"/>
</dbReference>
<dbReference type="GO" id="GO:0007099">
    <property type="term" value="P:centriole replication"/>
    <property type="evidence" value="ECO:0000250"/>
    <property type="project" value="UniProtKB"/>
</dbReference>
<dbReference type="GO" id="GO:0010457">
    <property type="term" value="P:centriole-centriole cohesion"/>
    <property type="evidence" value="ECO:0000250"/>
    <property type="project" value="UniProtKB"/>
</dbReference>
<dbReference type="GO" id="GO:0007098">
    <property type="term" value="P:centrosome cycle"/>
    <property type="evidence" value="ECO:0000250"/>
    <property type="project" value="UniProtKB"/>
</dbReference>
<dbReference type="InterPro" id="IPR033603">
    <property type="entry name" value="CEP44"/>
</dbReference>
<dbReference type="InterPro" id="IPR029157">
    <property type="entry name" value="CEP44_CC"/>
</dbReference>
<dbReference type="PANTHER" id="PTHR31477">
    <property type="entry name" value="CENTROSOMAL PROTEIN OF 44 KDA"/>
    <property type="match status" value="1"/>
</dbReference>
<dbReference type="PANTHER" id="PTHR31477:SF1">
    <property type="entry name" value="CENTROSOMAL PROTEIN OF 44 KDA"/>
    <property type="match status" value="1"/>
</dbReference>
<dbReference type="Pfam" id="PF15007">
    <property type="entry name" value="CEP44"/>
    <property type="match status" value="1"/>
</dbReference>
<accession>A2RVA7</accession>
<keyword id="KW-0175">Coiled coil</keyword>
<keyword id="KW-0963">Cytoplasm</keyword>
<keyword id="KW-0206">Cytoskeleton</keyword>
<keyword id="KW-1185">Reference proteome</keyword>
<comment type="function">
    <text evidence="1">Centriole-enriched microtubule-binding protein involved in centriole biogenesis. In collaboration with CEP295 and POC1B, is required for the centriole-to-centrosome conversion by ensuring the formation of bona fide centriole wall. Functions as a linker component that maintains centrosome cohesion. Associates with CROCC and regulates its stability and localization to the centrosome.</text>
</comment>
<comment type="subunit">
    <text evidence="1">Binds to centriolar microtubules.</text>
</comment>
<comment type="subcellular location">
    <subcellularLocation>
        <location evidence="1">Cytoplasm</location>
        <location evidence="1">Cytoskeleton</location>
        <location evidence="1">Microtubule organizing center</location>
        <location evidence="1">Centrosome</location>
    </subcellularLocation>
    <subcellularLocation>
        <location evidence="1">Cytoplasm</location>
        <location evidence="1">Cytoskeleton</location>
        <location evidence="1">Microtubule organizing center</location>
        <location evidence="1">Centrosome</location>
        <location evidence="1">Centriole</location>
    </subcellularLocation>
    <subcellularLocation>
        <location evidence="1">Cytoplasm</location>
        <location evidence="1">Cytoskeleton</location>
        <location evidence="1">Spindle pole</location>
    </subcellularLocation>
    <subcellularLocation>
        <location evidence="1">Midbody</location>
    </subcellularLocation>
    <text evidence="1">Localizes to the proximal end of mother and daughter centrioles.</text>
</comment>
<gene>
    <name type="primary">cep44</name>
</gene>
<proteinExistence type="evidence at transcript level"/>
<evidence type="ECO:0000250" key="1">
    <source>
        <dbReference type="UniProtKB" id="Q9C0F1"/>
    </source>
</evidence>
<evidence type="ECO:0000255" key="2"/>
<evidence type="ECO:0000256" key="3">
    <source>
        <dbReference type="SAM" id="MobiDB-lite"/>
    </source>
</evidence>